<accession>Q8YJS5</accession>
<protein>
    <recommendedName>
        <fullName evidence="1">tRNA uridine 5-carboxymethylaminomethyl modification enzyme MnmG</fullName>
    </recommendedName>
    <alternativeName>
        <fullName evidence="1">Glucose-inhibited division protein A</fullName>
    </alternativeName>
</protein>
<name>MNMG_BRUME</name>
<organism>
    <name type="scientific">Brucella melitensis biotype 1 (strain ATCC 23456 / CCUG 17765 / NCTC 10094 / 16M)</name>
    <dbReference type="NCBI Taxonomy" id="224914"/>
    <lineage>
        <taxon>Bacteria</taxon>
        <taxon>Pseudomonadati</taxon>
        <taxon>Pseudomonadota</taxon>
        <taxon>Alphaproteobacteria</taxon>
        <taxon>Hyphomicrobiales</taxon>
        <taxon>Brucellaceae</taxon>
        <taxon>Brucella/Ochrobactrum group</taxon>
        <taxon>Brucella</taxon>
    </lineage>
</organism>
<dbReference type="EMBL" id="AE008917">
    <property type="protein sequence ID" value="AAL51189.1"/>
    <property type="status" value="ALT_INIT"/>
    <property type="molecule type" value="Genomic_DNA"/>
</dbReference>
<dbReference type="PIR" id="AB3253">
    <property type="entry name" value="AB3253"/>
</dbReference>
<dbReference type="RefSeq" id="WP_004684530.1">
    <property type="nucleotide sequence ID" value="NC_003317.1"/>
</dbReference>
<dbReference type="SMR" id="Q8YJS5"/>
<dbReference type="GeneID" id="29593495"/>
<dbReference type="KEGG" id="bme:BMEI0007"/>
<dbReference type="KEGG" id="bmel:DK63_1425"/>
<dbReference type="PATRIC" id="fig|224914.52.peg.1501"/>
<dbReference type="eggNOG" id="COG0445">
    <property type="taxonomic scope" value="Bacteria"/>
</dbReference>
<dbReference type="PhylomeDB" id="Q8YJS5"/>
<dbReference type="Proteomes" id="UP000000419">
    <property type="component" value="Chromosome I"/>
</dbReference>
<dbReference type="GO" id="GO:0005829">
    <property type="term" value="C:cytosol"/>
    <property type="evidence" value="ECO:0007669"/>
    <property type="project" value="TreeGrafter"/>
</dbReference>
<dbReference type="GO" id="GO:0050660">
    <property type="term" value="F:flavin adenine dinucleotide binding"/>
    <property type="evidence" value="ECO:0007669"/>
    <property type="project" value="UniProtKB-UniRule"/>
</dbReference>
<dbReference type="GO" id="GO:0030488">
    <property type="term" value="P:tRNA methylation"/>
    <property type="evidence" value="ECO:0007669"/>
    <property type="project" value="TreeGrafter"/>
</dbReference>
<dbReference type="GO" id="GO:0002098">
    <property type="term" value="P:tRNA wobble uridine modification"/>
    <property type="evidence" value="ECO:0007669"/>
    <property type="project" value="InterPro"/>
</dbReference>
<dbReference type="FunFam" id="3.50.50.60:FF:000145">
    <property type="entry name" value="tRNA uridine 5-carboxymethylaminomethyl modification enzyme"/>
    <property type="match status" value="1"/>
</dbReference>
<dbReference type="FunFam" id="1.10.150.570:FF:000001">
    <property type="entry name" value="tRNA uridine 5-carboxymethylaminomethyl modification enzyme MnmG"/>
    <property type="match status" value="1"/>
</dbReference>
<dbReference type="FunFam" id="3.50.50.60:FF:000002">
    <property type="entry name" value="tRNA uridine 5-carboxymethylaminomethyl modification enzyme MnmG"/>
    <property type="match status" value="1"/>
</dbReference>
<dbReference type="Gene3D" id="3.50.50.60">
    <property type="entry name" value="FAD/NAD(P)-binding domain"/>
    <property type="match status" value="2"/>
</dbReference>
<dbReference type="Gene3D" id="1.10.150.570">
    <property type="entry name" value="GidA associated domain, C-terminal subdomain"/>
    <property type="match status" value="1"/>
</dbReference>
<dbReference type="Gene3D" id="1.10.10.1800">
    <property type="entry name" value="tRNA uridine 5-carboxymethylaminomethyl modification enzyme MnmG/GidA"/>
    <property type="match status" value="1"/>
</dbReference>
<dbReference type="HAMAP" id="MF_00129">
    <property type="entry name" value="MnmG_GidA"/>
    <property type="match status" value="1"/>
</dbReference>
<dbReference type="InterPro" id="IPR036188">
    <property type="entry name" value="FAD/NAD-bd_sf"/>
</dbReference>
<dbReference type="InterPro" id="IPR049312">
    <property type="entry name" value="GIDA_C_N"/>
</dbReference>
<dbReference type="InterPro" id="IPR004416">
    <property type="entry name" value="MnmG"/>
</dbReference>
<dbReference type="InterPro" id="IPR002218">
    <property type="entry name" value="MnmG-rel"/>
</dbReference>
<dbReference type="InterPro" id="IPR020595">
    <property type="entry name" value="MnmG-rel_CS"/>
</dbReference>
<dbReference type="InterPro" id="IPR026904">
    <property type="entry name" value="MnmG_C"/>
</dbReference>
<dbReference type="InterPro" id="IPR047001">
    <property type="entry name" value="MnmG_C_subdom"/>
</dbReference>
<dbReference type="InterPro" id="IPR044920">
    <property type="entry name" value="MnmG_C_subdom_sf"/>
</dbReference>
<dbReference type="InterPro" id="IPR040131">
    <property type="entry name" value="MnmG_N"/>
</dbReference>
<dbReference type="NCBIfam" id="TIGR00136">
    <property type="entry name" value="mnmG_gidA"/>
    <property type="match status" value="1"/>
</dbReference>
<dbReference type="PANTHER" id="PTHR11806">
    <property type="entry name" value="GLUCOSE INHIBITED DIVISION PROTEIN A"/>
    <property type="match status" value="1"/>
</dbReference>
<dbReference type="PANTHER" id="PTHR11806:SF0">
    <property type="entry name" value="PROTEIN MTO1 HOMOLOG, MITOCHONDRIAL"/>
    <property type="match status" value="1"/>
</dbReference>
<dbReference type="Pfam" id="PF01134">
    <property type="entry name" value="GIDA"/>
    <property type="match status" value="1"/>
</dbReference>
<dbReference type="Pfam" id="PF21680">
    <property type="entry name" value="GIDA_C_1st"/>
    <property type="match status" value="1"/>
</dbReference>
<dbReference type="Pfam" id="PF13932">
    <property type="entry name" value="SAM_GIDA_C"/>
    <property type="match status" value="1"/>
</dbReference>
<dbReference type="SMART" id="SM01228">
    <property type="entry name" value="GIDA_assoc_3"/>
    <property type="match status" value="1"/>
</dbReference>
<dbReference type="SUPFAM" id="SSF51905">
    <property type="entry name" value="FAD/NAD(P)-binding domain"/>
    <property type="match status" value="1"/>
</dbReference>
<dbReference type="PROSITE" id="PS01280">
    <property type="entry name" value="GIDA_1"/>
    <property type="match status" value="1"/>
</dbReference>
<dbReference type="PROSITE" id="PS01281">
    <property type="entry name" value="GIDA_2"/>
    <property type="match status" value="1"/>
</dbReference>
<reference key="1">
    <citation type="journal article" date="2002" name="Proc. Natl. Acad. Sci. U.S.A.">
        <title>The genome sequence of the facultative intracellular pathogen Brucella melitensis.</title>
        <authorList>
            <person name="DelVecchio V.G."/>
            <person name="Kapatral V."/>
            <person name="Redkar R.J."/>
            <person name="Patra G."/>
            <person name="Mujer C."/>
            <person name="Los T."/>
            <person name="Ivanova N."/>
            <person name="Anderson I."/>
            <person name="Bhattacharyya A."/>
            <person name="Lykidis A."/>
            <person name="Reznik G."/>
            <person name="Jablonski L."/>
            <person name="Larsen N."/>
            <person name="D'Souza M."/>
            <person name="Bernal A."/>
            <person name="Mazur M."/>
            <person name="Goltsman E."/>
            <person name="Selkov E."/>
            <person name="Elzer P.H."/>
            <person name="Hagius S."/>
            <person name="O'Callaghan D."/>
            <person name="Letesson J.-J."/>
            <person name="Haselkorn R."/>
            <person name="Kyrpides N.C."/>
            <person name="Overbeek R."/>
        </authorList>
    </citation>
    <scope>NUCLEOTIDE SEQUENCE [LARGE SCALE GENOMIC DNA]</scope>
    <source>
        <strain>ATCC 23456 / CCUG 17765 / NCTC 10094 / 16M</strain>
    </source>
</reference>
<keyword id="KW-0963">Cytoplasm</keyword>
<keyword id="KW-0274">FAD</keyword>
<keyword id="KW-0285">Flavoprotein</keyword>
<keyword id="KW-0520">NAD</keyword>
<keyword id="KW-0819">tRNA processing</keyword>
<evidence type="ECO:0000255" key="1">
    <source>
        <dbReference type="HAMAP-Rule" id="MF_00129"/>
    </source>
</evidence>
<evidence type="ECO:0000305" key="2"/>
<feature type="chain" id="PRO_0000117070" description="tRNA uridine 5-carboxymethylaminomethyl modification enzyme MnmG">
    <location>
        <begin position="1"/>
        <end position="636"/>
    </location>
</feature>
<feature type="binding site" evidence="1">
    <location>
        <begin position="15"/>
        <end position="20"/>
    </location>
    <ligand>
        <name>FAD</name>
        <dbReference type="ChEBI" id="CHEBI:57692"/>
    </ligand>
</feature>
<feature type="binding site" evidence="1">
    <location>
        <begin position="274"/>
        <end position="288"/>
    </location>
    <ligand>
        <name>NAD(+)</name>
        <dbReference type="ChEBI" id="CHEBI:57540"/>
    </ligand>
</feature>
<proteinExistence type="inferred from homology"/>
<comment type="function">
    <text evidence="1">NAD-binding protein involved in the addition of a carboxymethylaminomethyl (cmnm) group at the wobble position (U34) of certain tRNAs, forming tRNA-cmnm(5)s(2)U34.</text>
</comment>
<comment type="cofactor">
    <cofactor evidence="1">
        <name>FAD</name>
        <dbReference type="ChEBI" id="CHEBI:57692"/>
    </cofactor>
</comment>
<comment type="subunit">
    <text evidence="1">Homodimer. Heterotetramer of two MnmE and two MnmG subunits.</text>
</comment>
<comment type="subcellular location">
    <subcellularLocation>
        <location evidence="1">Cytoplasm</location>
    </subcellularLocation>
</comment>
<comment type="similarity">
    <text evidence="1">Belongs to the MnmG family.</text>
</comment>
<comment type="sequence caution" evidence="2">
    <conflict type="erroneous initiation">
        <sequence resource="EMBL-CDS" id="AAL51189"/>
    </conflict>
</comment>
<gene>
    <name evidence="1" type="primary">mnmG</name>
    <name evidence="1" type="synonym">gidA</name>
    <name type="ordered locus">BMEI0007</name>
</gene>
<sequence>MSSAEALAFDVIVIGGGHAGCEAASAAARAGARTALVTHRFDTIGVMSCNPAIGGLGKGHLVREIDALDGLMGRVADRAGIQFRLLNRRKGPAVRGPRTQADRKLYRLSMQQMITEQENLTVVEGGAADLVCDGERISGVTLADGRVLKCGAVVLTTGTFLNGLIHIGEKRFPAGRMGEKPALGLSERLLSFGFTLGRLKTGTPPRLDGRTIDWQSLDMQSADEEPVPFSLMTDRITTPQIECGITRTTPETHDIIRANLHRSAMYSGSIEGIGPRYCPSVEDKIVKFGNRDGHQIFLEPEGLDDDTVYPNGISTSLPEDVQLEILKTIPGLEKAVLLQPGYAIEYDFIDPRELKRSLETRKVCGLFLAGQINGTTGYEEAGAQGLLAGLNAARRAAGSEPVILQRTEAYIGVMVDDLTSRGVSEPYRMFTSRAEFRLSLRADNADQRLTPLADEVGILSEERRKRYLTRETALSHARMVTQSLSITPNLAGYYDLRLNQDGVRRSAYDLLSYPDINLDRLIAIWPELASIDPVTREALEIEAQYAVYMERQQSDIAVMEREERLLIPSGLDFDAISGLSNELKQKLKQRKPETIAEAQRVDGITPAAVALLIAQIRKFGGRQKLAAETLEGKGAA</sequence>